<protein>
    <recommendedName>
        <fullName>Cytochrome P450 3A30</fullName>
        <ecNumber>1.14.14.1</ecNumber>
    </recommendedName>
    <alternativeName>
        <fullName>CYPIIIA30</fullName>
    </alternativeName>
</protein>
<organism>
    <name type="scientific">Fundulus heteroclitus</name>
    <name type="common">Killifish</name>
    <name type="synonym">Mummichog</name>
    <dbReference type="NCBI Taxonomy" id="8078"/>
    <lineage>
        <taxon>Eukaryota</taxon>
        <taxon>Metazoa</taxon>
        <taxon>Chordata</taxon>
        <taxon>Craniata</taxon>
        <taxon>Vertebrata</taxon>
        <taxon>Euteleostomi</taxon>
        <taxon>Actinopterygii</taxon>
        <taxon>Neopterygii</taxon>
        <taxon>Teleostei</taxon>
        <taxon>Neoteleostei</taxon>
        <taxon>Acanthomorphata</taxon>
        <taxon>Ovalentaria</taxon>
        <taxon>Atherinomorphae</taxon>
        <taxon>Cyprinodontiformes</taxon>
        <taxon>Fundulidae</taxon>
        <taxon>Fundulus</taxon>
    </lineage>
</organism>
<reference key="1">
    <citation type="journal article" date="2003" name="Aquat. Toxicol.">
        <title>Hepatic versus extrahepatic expression of CYP3A30 and CYP3A56 in adult killifish (Fundulus heteroclitus).</title>
        <authorList>
            <person name="Hegelund T."/>
            <person name="Celander M.C."/>
        </authorList>
    </citation>
    <scope>NUCLEOTIDE SEQUENCE [MRNA]</scope>
    <scope>TISSUE SPECIFICITY</scope>
    <source>
        <tissue>Intestine</tissue>
        <tissue>Liver</tissue>
    </source>
</reference>
<reference key="2">
    <citation type="journal article" date="1997" name="Biochem. Biophys. Res. Commun.">
        <title>Isolation of a cytochrome P450 3A cDNA sequence (CYP3A30) from the marine teleost Fundulus heteroclitus and phylogenetic analyses of CYP3A genes.</title>
        <authorList>
            <person name="Celander M.C."/>
            <person name="Stegeman J.J."/>
        </authorList>
    </citation>
    <scope>NUCLEOTIDE SEQUENCE [MRNA] OF 312-435</scope>
    <source>
        <tissue>Liver</tissue>
    </source>
</reference>
<keyword id="KW-0256">Endoplasmic reticulum</keyword>
<keyword id="KW-0349">Heme</keyword>
<keyword id="KW-0408">Iron</keyword>
<keyword id="KW-0472">Membrane</keyword>
<keyword id="KW-0479">Metal-binding</keyword>
<keyword id="KW-0492">Microsome</keyword>
<keyword id="KW-0503">Monooxygenase</keyword>
<keyword id="KW-0560">Oxidoreductase</keyword>
<evidence type="ECO:0000250" key="1"/>
<evidence type="ECO:0000269" key="2">
    <source>
    </source>
</evidence>
<evidence type="ECO:0000305" key="3"/>
<comment type="function">
    <text>Putative steroid 6-beta-hydroxylase.</text>
</comment>
<comment type="catalytic activity">
    <reaction>
        <text>an organic molecule + reduced [NADPH--hemoprotein reductase] + O2 = an alcohol + oxidized [NADPH--hemoprotein reductase] + H2O + H(+)</text>
        <dbReference type="Rhea" id="RHEA:17149"/>
        <dbReference type="Rhea" id="RHEA-COMP:11964"/>
        <dbReference type="Rhea" id="RHEA-COMP:11965"/>
        <dbReference type="ChEBI" id="CHEBI:15377"/>
        <dbReference type="ChEBI" id="CHEBI:15378"/>
        <dbReference type="ChEBI" id="CHEBI:15379"/>
        <dbReference type="ChEBI" id="CHEBI:30879"/>
        <dbReference type="ChEBI" id="CHEBI:57618"/>
        <dbReference type="ChEBI" id="CHEBI:58210"/>
        <dbReference type="ChEBI" id="CHEBI:142491"/>
        <dbReference type="EC" id="1.14.14.1"/>
    </reaction>
</comment>
<comment type="cofactor">
    <cofactor evidence="1">
        <name>heme</name>
        <dbReference type="ChEBI" id="CHEBI:30413"/>
    </cofactor>
</comment>
<comment type="subcellular location">
    <subcellularLocation>
        <location evidence="3">Endoplasmic reticulum membrane</location>
        <topology evidence="3">Peripheral membrane protein</topology>
    </subcellularLocation>
    <subcellularLocation>
        <location evidence="3">Microsome membrane</location>
        <topology evidence="3">Peripheral membrane protein</topology>
    </subcellularLocation>
</comment>
<comment type="tissue specificity">
    <text evidence="2">Highly expressed in liver and intestine. Moderate expression in gill and spleen. Low expression in kidney, brain and heart.</text>
</comment>
<comment type="similarity">
    <text evidence="3">Belongs to the cytochrome P450 family.</text>
</comment>
<comment type="caution">
    <text evidence="3">Due to a recent gene duplication event, CYP3A30 and CYP3A56 are very similar. Because of this it was not possible to distinguish between the two genes when measuring the tissue expression.</text>
</comment>
<dbReference type="EC" id="1.14.14.1"/>
<dbReference type="EMBL" id="AF105068">
    <property type="protein sequence ID" value="AAF14117.2"/>
    <property type="molecule type" value="mRNA"/>
</dbReference>
<dbReference type="PIR" id="A58612">
    <property type="entry name" value="A58612"/>
</dbReference>
<dbReference type="SMR" id="Q9PVE8"/>
<dbReference type="Proteomes" id="UP000265000">
    <property type="component" value="Whole Genome Shotgun Assembly"/>
</dbReference>
<dbReference type="GO" id="GO:0005789">
    <property type="term" value="C:endoplasmic reticulum membrane"/>
    <property type="evidence" value="ECO:0007669"/>
    <property type="project" value="UniProtKB-SubCell"/>
</dbReference>
<dbReference type="GO" id="GO:0020037">
    <property type="term" value="F:heme binding"/>
    <property type="evidence" value="ECO:0007669"/>
    <property type="project" value="InterPro"/>
</dbReference>
<dbReference type="GO" id="GO:0005506">
    <property type="term" value="F:iron ion binding"/>
    <property type="evidence" value="ECO:0007669"/>
    <property type="project" value="InterPro"/>
</dbReference>
<dbReference type="GO" id="GO:0016712">
    <property type="term" value="F:oxidoreductase activity, acting on paired donors, with incorporation or reduction of molecular oxygen, reduced flavin or flavoprotein as one donor, and incorporation of one atom of oxygen"/>
    <property type="evidence" value="ECO:0007669"/>
    <property type="project" value="UniProtKB-EC"/>
</dbReference>
<dbReference type="GO" id="GO:0008395">
    <property type="term" value="F:steroid hydroxylase activity"/>
    <property type="evidence" value="ECO:0007669"/>
    <property type="project" value="TreeGrafter"/>
</dbReference>
<dbReference type="CDD" id="cd20650">
    <property type="entry name" value="CYP3A"/>
    <property type="match status" value="1"/>
</dbReference>
<dbReference type="FunFam" id="1.10.630.10:FF:000003">
    <property type="entry name" value="cytochrome P450 3A12-like isoform X2"/>
    <property type="match status" value="1"/>
</dbReference>
<dbReference type="Gene3D" id="1.10.630.10">
    <property type="entry name" value="Cytochrome P450"/>
    <property type="match status" value="1"/>
</dbReference>
<dbReference type="InterPro" id="IPR001128">
    <property type="entry name" value="Cyt_P450"/>
</dbReference>
<dbReference type="InterPro" id="IPR017972">
    <property type="entry name" value="Cyt_P450_CS"/>
</dbReference>
<dbReference type="InterPro" id="IPR008072">
    <property type="entry name" value="Cyt_P450_E_CYP3A"/>
</dbReference>
<dbReference type="InterPro" id="IPR002402">
    <property type="entry name" value="Cyt_P450_E_grp-II"/>
</dbReference>
<dbReference type="InterPro" id="IPR036396">
    <property type="entry name" value="Cyt_P450_sf"/>
</dbReference>
<dbReference type="InterPro" id="IPR050705">
    <property type="entry name" value="Cytochrome_P450_3A"/>
</dbReference>
<dbReference type="PANTHER" id="PTHR24302">
    <property type="entry name" value="CYTOCHROME P450 FAMILY 3"/>
    <property type="match status" value="1"/>
</dbReference>
<dbReference type="PANTHER" id="PTHR24302:SF32">
    <property type="entry name" value="CYTOCHROME P450, FAMILY 3, SUBFAMILY A, POLYPEPTIDE 65"/>
    <property type="match status" value="1"/>
</dbReference>
<dbReference type="Pfam" id="PF00067">
    <property type="entry name" value="p450"/>
    <property type="match status" value="1"/>
</dbReference>
<dbReference type="PRINTS" id="PR00464">
    <property type="entry name" value="EP450II"/>
</dbReference>
<dbReference type="PRINTS" id="PR01689">
    <property type="entry name" value="EP450IICYP3A"/>
</dbReference>
<dbReference type="PRINTS" id="PR00385">
    <property type="entry name" value="P450"/>
</dbReference>
<dbReference type="SUPFAM" id="SSF48264">
    <property type="entry name" value="Cytochrome P450"/>
    <property type="match status" value="1"/>
</dbReference>
<dbReference type="PROSITE" id="PS00086">
    <property type="entry name" value="CYTOCHROME_P450"/>
    <property type="match status" value="1"/>
</dbReference>
<proteinExistence type="evidence at transcript level"/>
<accession>Q9PVE8</accession>
<feature type="chain" id="PRO_0000051809" description="Cytochrome P450 3A30">
    <location>
        <begin position="1"/>
        <end position="496"/>
    </location>
</feature>
<feature type="binding site" description="axial binding residue" evidence="1">
    <location>
        <position position="441"/>
    </location>
    <ligand>
        <name>heme</name>
        <dbReference type="ChEBI" id="CHEBI:30413"/>
    </ligand>
    <ligandPart>
        <name>Fe</name>
        <dbReference type="ChEBI" id="CHEBI:18248"/>
    </ligandPart>
</feature>
<sequence>MGYFYLTAETWTLLVAFVTLLLVYAYWPYGTFKRLGISGPKPVPFFGTMLHYRRGFFTFDEECKKKYGKVWGIYDGRQPVLCVTDPEIIKAVLVKECLSFFTNRRNFRLNGPLYDAVSIAEDDQWKRIRSVLSPSFTSGRLKEMFEIMKNHSANLIRSMKKKADKDEPLDLKEFFGSYSMDVVTSTAFSVDIDSLNNPSDPFVTNIKKMLKFDFLNPLFLAVAFFPFLGPILEKFELSFFPKSVTDFFYASLEKIKSNREASQQKSRVDFLQLMIDSQKNSGAQQDKSLTDHEILSQSMIFIFAGYETSSSSLTFLAYNLATNPEVMKKLQEEIDATFPNKAPVHYQPLMEMEYLDCVINESLRLFPIAARLERVAKAAVEINGVVIPKDMVVMIPTWPLHRDPEIWPEPEAFKPERFSKKNKDNIDPYIYMPFGSGPRNCIGMRFALVLIKLAVVEILQQYSFSVCKETEVPFEMDIQGLLAPKRPIQLKLVPRS</sequence>
<gene>
    <name type="primary">cyp3a30</name>
</gene>
<name>C330_FUNHE</name>